<geneLocation type="plasmid">
    <name>pAZ1</name>
</geneLocation>
<accession>P12833</accession>
<protein>
    <recommendedName>
        <fullName>Dihydrofolate reductase type 3</fullName>
        <ecNumber>1.5.1.3</ecNumber>
    </recommendedName>
    <alternativeName>
        <fullName>Dihydrofolate reductase type III</fullName>
    </alternativeName>
</protein>
<evidence type="ECO:0000250" key="1"/>
<evidence type="ECO:0000255" key="2">
    <source>
        <dbReference type="PROSITE-ProRule" id="PRU00660"/>
    </source>
</evidence>
<evidence type="ECO:0000305" key="3"/>
<dbReference type="EC" id="1.5.1.3"/>
<dbReference type="EMBL" id="J03306">
    <property type="protein sequence ID" value="AAA25550.1"/>
    <property type="molecule type" value="Genomic_DNA"/>
</dbReference>
<dbReference type="PIR" id="B22241">
    <property type="entry name" value="B22241"/>
</dbReference>
<dbReference type="PIR" id="JT0266">
    <property type="entry name" value="RDEBDT"/>
</dbReference>
<dbReference type="SMR" id="P12833"/>
<dbReference type="CARD" id="ARO:3003105">
    <property type="molecule name" value="dfrA3"/>
    <property type="mechanism identifier" value="ARO:0001002"/>
    <property type="mechanism name" value="antibiotic target replacement"/>
</dbReference>
<dbReference type="KEGG" id="ag:AAA25550"/>
<dbReference type="UniPathway" id="UPA00077">
    <property type="reaction ID" value="UER00158"/>
</dbReference>
<dbReference type="GO" id="GO:0005829">
    <property type="term" value="C:cytosol"/>
    <property type="evidence" value="ECO:0007669"/>
    <property type="project" value="TreeGrafter"/>
</dbReference>
<dbReference type="GO" id="GO:0004146">
    <property type="term" value="F:dihydrofolate reductase activity"/>
    <property type="evidence" value="ECO:0007669"/>
    <property type="project" value="UniProtKB-EC"/>
</dbReference>
<dbReference type="GO" id="GO:0050661">
    <property type="term" value="F:NADP binding"/>
    <property type="evidence" value="ECO:0007669"/>
    <property type="project" value="InterPro"/>
</dbReference>
<dbReference type="GO" id="GO:0046452">
    <property type="term" value="P:dihydrofolate metabolic process"/>
    <property type="evidence" value="ECO:0007669"/>
    <property type="project" value="TreeGrafter"/>
</dbReference>
<dbReference type="GO" id="GO:0046655">
    <property type="term" value="P:folic acid metabolic process"/>
    <property type="evidence" value="ECO:0007669"/>
    <property type="project" value="TreeGrafter"/>
</dbReference>
<dbReference type="GO" id="GO:0006730">
    <property type="term" value="P:one-carbon metabolic process"/>
    <property type="evidence" value="ECO:0007669"/>
    <property type="project" value="UniProtKB-KW"/>
</dbReference>
<dbReference type="GO" id="GO:0046677">
    <property type="term" value="P:response to antibiotic"/>
    <property type="evidence" value="ECO:0007669"/>
    <property type="project" value="UniProtKB-KW"/>
</dbReference>
<dbReference type="GO" id="GO:0031427">
    <property type="term" value="P:response to methotrexate"/>
    <property type="evidence" value="ECO:0007669"/>
    <property type="project" value="UniProtKB-KW"/>
</dbReference>
<dbReference type="GO" id="GO:0046654">
    <property type="term" value="P:tetrahydrofolate biosynthetic process"/>
    <property type="evidence" value="ECO:0007669"/>
    <property type="project" value="UniProtKB-UniPathway"/>
</dbReference>
<dbReference type="CDD" id="cd00209">
    <property type="entry name" value="DHFR"/>
    <property type="match status" value="1"/>
</dbReference>
<dbReference type="FunFam" id="3.40.430.10:FF:000001">
    <property type="entry name" value="Dihydrofolate reductase"/>
    <property type="match status" value="1"/>
</dbReference>
<dbReference type="Gene3D" id="3.40.430.10">
    <property type="entry name" value="Dihydrofolate Reductase, subunit A"/>
    <property type="match status" value="1"/>
</dbReference>
<dbReference type="InterPro" id="IPR012259">
    <property type="entry name" value="DHFR"/>
</dbReference>
<dbReference type="InterPro" id="IPR024072">
    <property type="entry name" value="DHFR-like_dom_sf"/>
</dbReference>
<dbReference type="InterPro" id="IPR017925">
    <property type="entry name" value="DHFR_CS"/>
</dbReference>
<dbReference type="InterPro" id="IPR001796">
    <property type="entry name" value="DHFR_dom"/>
</dbReference>
<dbReference type="NCBIfam" id="NF008037">
    <property type="entry name" value="PRK10769.1"/>
    <property type="match status" value="1"/>
</dbReference>
<dbReference type="NCBIfam" id="NF000019">
    <property type="entry name" value="trim_DfrA3"/>
    <property type="match status" value="1"/>
</dbReference>
<dbReference type="PANTHER" id="PTHR48069">
    <property type="entry name" value="DIHYDROFOLATE REDUCTASE"/>
    <property type="match status" value="1"/>
</dbReference>
<dbReference type="PANTHER" id="PTHR48069:SF3">
    <property type="entry name" value="DIHYDROFOLATE REDUCTASE"/>
    <property type="match status" value="1"/>
</dbReference>
<dbReference type="Pfam" id="PF00186">
    <property type="entry name" value="DHFR_1"/>
    <property type="match status" value="1"/>
</dbReference>
<dbReference type="PIRSF" id="PIRSF000194">
    <property type="entry name" value="DHFR"/>
    <property type="match status" value="1"/>
</dbReference>
<dbReference type="PRINTS" id="PR00070">
    <property type="entry name" value="DHFR"/>
</dbReference>
<dbReference type="SUPFAM" id="SSF53597">
    <property type="entry name" value="Dihydrofolate reductase-like"/>
    <property type="match status" value="1"/>
</dbReference>
<dbReference type="PROSITE" id="PS00075">
    <property type="entry name" value="DHFR_1"/>
    <property type="match status" value="1"/>
</dbReference>
<dbReference type="PROSITE" id="PS51330">
    <property type="entry name" value="DHFR_2"/>
    <property type="match status" value="1"/>
</dbReference>
<sequence>MLISLIAALAHNNLIGKDNLIPWHLPADLRHFKAVTLGKPVVMGRRTFESIGRPLPGRRNVVVSRNPQWQAEGVEVAPSLDAALALLTDCEEAMIIGGGQLYAEALPRADRLYLTYIDAQLNGDTHFPDYLSLGWQELERSTHPADDKNSYACEFVTLSRQR</sequence>
<comment type="function">
    <text evidence="1">Key enzyme in folate metabolism. Catalyzes an essential reaction for de novo glycine and purine synthesis, and for DNA precursor synthesis (By similarity).</text>
</comment>
<comment type="catalytic activity">
    <reaction evidence="2">
        <text>(6S)-5,6,7,8-tetrahydrofolate + NADP(+) = 7,8-dihydrofolate + NADPH + H(+)</text>
        <dbReference type="Rhea" id="RHEA:15009"/>
        <dbReference type="ChEBI" id="CHEBI:15378"/>
        <dbReference type="ChEBI" id="CHEBI:57451"/>
        <dbReference type="ChEBI" id="CHEBI:57453"/>
        <dbReference type="ChEBI" id="CHEBI:57783"/>
        <dbReference type="ChEBI" id="CHEBI:58349"/>
        <dbReference type="EC" id="1.5.1.3"/>
    </reaction>
</comment>
<comment type="pathway">
    <text>Cofactor biosynthesis; tetrahydrofolate biosynthesis; 5,6,7,8-tetrahydrofolate from 7,8-dihydrofolate: step 1/1.</text>
</comment>
<comment type="subunit">
    <text>Monomer.</text>
</comment>
<comment type="miscellaneous">
    <text>The plasmid pAZ1 determines trimethoprim and sulphonamide resistance.</text>
</comment>
<comment type="similarity">
    <text evidence="3">Belongs to the dihydrofolate reductase family.</text>
</comment>
<feature type="chain" id="PRO_0000186421" description="Dihydrofolate reductase type 3">
    <location>
        <begin position="1"/>
        <end position="162"/>
    </location>
</feature>
<feature type="domain" description="DHFR" evidence="2">
    <location>
        <begin position="2"/>
        <end position="160"/>
    </location>
</feature>
<feature type="sequence conflict" description="In Ref. 2; AA sequence." evidence="3" ref="2">
    <original>A</original>
    <variation>S</variation>
    <location>
        <position position="8"/>
    </location>
</feature>
<keyword id="KW-0046">Antibiotic resistance</keyword>
<keyword id="KW-0903">Direct protein sequencing</keyword>
<keyword id="KW-0487">Methotrexate resistance</keyword>
<keyword id="KW-0521">NADP</keyword>
<keyword id="KW-0554">One-carbon metabolism</keyword>
<keyword id="KW-0560">Oxidoreductase</keyword>
<keyword id="KW-0614">Plasmid</keyword>
<keyword id="KW-0817">Trimethoprim resistance</keyword>
<gene>
    <name type="primary">dhfrIII</name>
</gene>
<organism>
    <name type="scientific">Salmonella typhimurium</name>
    <dbReference type="NCBI Taxonomy" id="90371"/>
    <lineage>
        <taxon>Bacteria</taxon>
        <taxon>Pseudomonadati</taxon>
        <taxon>Pseudomonadota</taxon>
        <taxon>Gammaproteobacteria</taxon>
        <taxon>Enterobacterales</taxon>
        <taxon>Enterobacteriaceae</taxon>
        <taxon>Salmonella</taxon>
    </lineage>
</organism>
<reference key="1">
    <citation type="journal article" date="1988" name="Plasmid">
        <title>Characterization of plasmid pAZ1 and the type III dihydrofolate reductase gene.</title>
        <authorList>
            <person name="Fling M.E."/>
            <person name="Kopf J."/>
            <person name="Richards C."/>
        </authorList>
    </citation>
    <scope>NUCLEOTIDE SEQUENCE [GENOMIC DNA]</scope>
</reference>
<reference key="2">
    <citation type="journal article" date="1984" name="J. Biol. Chem.">
        <title>Characterization of an R-plasmid dihydrofolate reductase with a monomeric structure.</title>
        <authorList>
            <person name="Joyner S.S."/>
            <person name="Fling M.E."/>
            <person name="Stone D."/>
            <person name="Baccanari D.P."/>
        </authorList>
    </citation>
    <scope>PROTEIN SEQUENCE OF 1-21</scope>
</reference>
<proteinExistence type="evidence at protein level"/>
<name>DYR3_SALTM</name>